<evidence type="ECO:0000256" key="1">
    <source>
        <dbReference type="SAM" id="MobiDB-lite"/>
    </source>
</evidence>
<evidence type="ECO:0000269" key="2">
    <source>
    </source>
</evidence>
<evidence type="ECO:0000269" key="3">
    <source>
    </source>
</evidence>
<evidence type="ECO:0000269" key="4">
    <source>
    </source>
</evidence>
<evidence type="ECO:0000305" key="5"/>
<evidence type="ECO:0007744" key="6">
    <source>
    </source>
</evidence>
<evidence type="ECO:0007744" key="7">
    <source>
    </source>
</evidence>
<evidence type="ECO:0007744" key="8">
    <source>
    </source>
</evidence>
<accession>Q9GZR2</accession>
<accession>B2RAT2</accession>
<accession>Q5T8S4</accession>
<accession>Q5T8S5</accession>
<accession>Q5T8S6</accession>
<accession>Q9GZW3</accession>
<name>REXO4_HUMAN</name>
<dbReference type="EC" id="3.1.-.-"/>
<dbReference type="EMBL" id="AF295774">
    <property type="protein sequence ID" value="AAG02123.1"/>
    <property type="molecule type" value="mRNA"/>
</dbReference>
<dbReference type="EMBL" id="AF273304">
    <property type="protein sequence ID" value="AAF98162.1"/>
    <property type="molecule type" value="mRNA"/>
</dbReference>
<dbReference type="EMBL" id="AL136894">
    <property type="protein sequence ID" value="CAB66828.1"/>
    <property type="molecule type" value="mRNA"/>
</dbReference>
<dbReference type="EMBL" id="AK025493">
    <property type="protein sequence ID" value="BAB15152.1"/>
    <property type="molecule type" value="mRNA"/>
</dbReference>
<dbReference type="EMBL" id="AK314333">
    <property type="protein sequence ID" value="BAG36979.1"/>
    <property type="molecule type" value="mRNA"/>
</dbReference>
<dbReference type="EMBL" id="AL158826">
    <property type="protein sequence ID" value="CAI12845.1"/>
    <property type="status" value="ALT_SEQ"/>
    <property type="molecule type" value="Genomic_DNA"/>
</dbReference>
<dbReference type="EMBL" id="AL158826">
    <property type="protein sequence ID" value="CAI12847.1"/>
    <property type="status" value="ALT_SEQ"/>
    <property type="molecule type" value="Genomic_DNA"/>
</dbReference>
<dbReference type="EMBL" id="AL158826">
    <property type="protein sequence ID" value="CAI12848.1"/>
    <property type="status" value="ALT_SEQ"/>
    <property type="molecule type" value="Genomic_DNA"/>
</dbReference>
<dbReference type="EMBL" id="AL158826">
    <property type="protein sequence ID" value="CAI12849.1"/>
    <property type="molecule type" value="Genomic_DNA"/>
</dbReference>
<dbReference type="EMBL" id="CH471090">
    <property type="protein sequence ID" value="EAW88082.1"/>
    <property type="molecule type" value="Genomic_DNA"/>
</dbReference>
<dbReference type="EMBL" id="BC009274">
    <property type="protein sequence ID" value="AAH09274.1"/>
    <property type="molecule type" value="mRNA"/>
</dbReference>
<dbReference type="CCDS" id="CCDS65179.1">
    <molecule id="Q9GZR2-2"/>
</dbReference>
<dbReference type="CCDS" id="CCDS6969.1">
    <molecule id="Q9GZR2-1"/>
</dbReference>
<dbReference type="RefSeq" id="NP_001266278.1">
    <molecule id="Q9GZR2-2"/>
    <property type="nucleotide sequence ID" value="NM_001279349.2"/>
</dbReference>
<dbReference type="RefSeq" id="NP_001266279.1">
    <property type="nucleotide sequence ID" value="NM_001279350.1"/>
</dbReference>
<dbReference type="RefSeq" id="NP_001266280.1">
    <property type="nucleotide sequence ID" value="NM_001279351.1"/>
</dbReference>
<dbReference type="RefSeq" id="NP_065118.2">
    <molecule id="Q9GZR2-1"/>
    <property type="nucleotide sequence ID" value="NM_020385.4"/>
</dbReference>
<dbReference type="SMR" id="Q9GZR2"/>
<dbReference type="BioGRID" id="121375">
    <property type="interactions" value="269"/>
</dbReference>
<dbReference type="FunCoup" id="Q9GZR2">
    <property type="interactions" value="2482"/>
</dbReference>
<dbReference type="IntAct" id="Q9GZR2">
    <property type="interactions" value="200"/>
</dbReference>
<dbReference type="MINT" id="Q9GZR2"/>
<dbReference type="STRING" id="9606.ENSP00000361010"/>
<dbReference type="GlyGen" id="Q9GZR2">
    <property type="glycosylation" value="1 site, 1 O-linked glycan (1 site)"/>
</dbReference>
<dbReference type="iPTMnet" id="Q9GZR2"/>
<dbReference type="PhosphoSitePlus" id="Q9GZR2"/>
<dbReference type="SwissPalm" id="Q9GZR2"/>
<dbReference type="BioMuta" id="REXO4"/>
<dbReference type="DMDM" id="71153418"/>
<dbReference type="jPOST" id="Q9GZR2"/>
<dbReference type="MassIVE" id="Q9GZR2"/>
<dbReference type="PaxDb" id="9606-ENSP00000361010"/>
<dbReference type="PeptideAtlas" id="Q9GZR2"/>
<dbReference type="ProteomicsDB" id="80118">
    <molecule id="Q9GZR2-1"/>
</dbReference>
<dbReference type="ProteomicsDB" id="80119">
    <molecule id="Q9GZR2-2"/>
</dbReference>
<dbReference type="Pumba" id="Q9GZR2"/>
<dbReference type="Antibodypedia" id="18377">
    <property type="antibodies" value="126 antibodies from 25 providers"/>
</dbReference>
<dbReference type="DNASU" id="57109"/>
<dbReference type="Ensembl" id="ENST00000371935.6">
    <molecule id="Q9GZR2-2"/>
    <property type="protein sequence ID" value="ENSP00000361003.2"/>
    <property type="gene ID" value="ENSG00000148300.12"/>
</dbReference>
<dbReference type="Ensembl" id="ENST00000371942.8">
    <molecule id="Q9GZR2-1"/>
    <property type="protein sequence ID" value="ENSP00000361010.3"/>
    <property type="gene ID" value="ENSG00000148300.12"/>
</dbReference>
<dbReference type="Ensembl" id="ENST00000628678.2">
    <molecule id="Q9GZR2-2"/>
    <property type="protein sequence ID" value="ENSP00000487504.1"/>
    <property type="gene ID" value="ENSG00000280706.3"/>
</dbReference>
<dbReference type="Ensembl" id="ENST00000630460.3">
    <molecule id="Q9GZR2-1"/>
    <property type="protein sequence ID" value="ENSP00000486065.1"/>
    <property type="gene ID" value="ENSG00000280706.3"/>
</dbReference>
<dbReference type="GeneID" id="57109"/>
<dbReference type="KEGG" id="hsa:57109"/>
<dbReference type="MANE-Select" id="ENST00000371942.8">
    <property type="protein sequence ID" value="ENSP00000361010.3"/>
    <property type="RefSeq nucleotide sequence ID" value="NM_020385.4"/>
    <property type="RefSeq protein sequence ID" value="NP_065118.2"/>
</dbReference>
<dbReference type="UCSC" id="uc004cdm.5">
    <molecule id="Q9GZR2-1"/>
    <property type="organism name" value="human"/>
</dbReference>
<dbReference type="AGR" id="HGNC:12820"/>
<dbReference type="CTD" id="57109"/>
<dbReference type="DisGeNET" id="57109"/>
<dbReference type="GeneCards" id="REXO4"/>
<dbReference type="HGNC" id="HGNC:12820">
    <property type="gene designation" value="REXO4"/>
</dbReference>
<dbReference type="HPA" id="ENSG00000148300">
    <property type="expression patterns" value="Low tissue specificity"/>
</dbReference>
<dbReference type="MIM" id="602930">
    <property type="type" value="gene"/>
</dbReference>
<dbReference type="neXtProt" id="NX_Q9GZR2"/>
<dbReference type="OpenTargets" id="ENSG00000148300"/>
<dbReference type="PharmGKB" id="PA37414"/>
<dbReference type="VEuPathDB" id="HostDB:ENSG00000148300"/>
<dbReference type="eggNOG" id="KOG2249">
    <property type="taxonomic scope" value="Eukaryota"/>
</dbReference>
<dbReference type="GeneTree" id="ENSGT00940000159607"/>
<dbReference type="HOGENOM" id="CLU_1111086_0_0_1"/>
<dbReference type="InParanoid" id="Q9GZR2"/>
<dbReference type="OMA" id="YIKPTEP"/>
<dbReference type="OrthoDB" id="8191639at2759"/>
<dbReference type="PAN-GO" id="Q9GZR2">
    <property type="GO annotations" value="4 GO annotations based on evolutionary models"/>
</dbReference>
<dbReference type="PhylomeDB" id="Q9GZR2"/>
<dbReference type="TreeFam" id="TF313504"/>
<dbReference type="PathwayCommons" id="Q9GZR2"/>
<dbReference type="SignaLink" id="Q9GZR2"/>
<dbReference type="BioGRID-ORCS" id="57109">
    <property type="hits" value="8 hits in 1162 CRISPR screens"/>
</dbReference>
<dbReference type="CD-CODE" id="91857CE7">
    <property type="entry name" value="Nucleolus"/>
</dbReference>
<dbReference type="ChiTaRS" id="REXO4">
    <property type="organism name" value="human"/>
</dbReference>
<dbReference type="GeneWiki" id="REXO4"/>
<dbReference type="GenomeRNAi" id="57109"/>
<dbReference type="Pharos" id="Q9GZR2">
    <property type="development level" value="Tbio"/>
</dbReference>
<dbReference type="PRO" id="PR:Q9GZR2"/>
<dbReference type="Proteomes" id="UP000005640">
    <property type="component" value="Chromosome 9"/>
</dbReference>
<dbReference type="RNAct" id="Q9GZR2">
    <property type="molecule type" value="protein"/>
</dbReference>
<dbReference type="Bgee" id="ENSG00000148300">
    <property type="expression patterns" value="Expressed in sural nerve and 100 other cell types or tissues"/>
</dbReference>
<dbReference type="ExpressionAtlas" id="Q9GZR2">
    <property type="expression patterns" value="baseline and differential"/>
</dbReference>
<dbReference type="GO" id="GO:0016607">
    <property type="term" value="C:nuclear speck"/>
    <property type="evidence" value="ECO:0000314"/>
    <property type="project" value="HPA"/>
</dbReference>
<dbReference type="GO" id="GO:0005730">
    <property type="term" value="C:nucleolus"/>
    <property type="evidence" value="ECO:0000314"/>
    <property type="project" value="LIFEdb"/>
</dbReference>
<dbReference type="GO" id="GO:0005654">
    <property type="term" value="C:nucleoplasm"/>
    <property type="evidence" value="ECO:0000314"/>
    <property type="project" value="HPA"/>
</dbReference>
<dbReference type="GO" id="GO:0005634">
    <property type="term" value="C:nucleus"/>
    <property type="evidence" value="ECO:0000318"/>
    <property type="project" value="GO_Central"/>
</dbReference>
<dbReference type="GO" id="GO:0008408">
    <property type="term" value="F:3'-5' exonuclease activity"/>
    <property type="evidence" value="ECO:0000314"/>
    <property type="project" value="ARUK-UCL"/>
</dbReference>
<dbReference type="GO" id="GO:0003690">
    <property type="term" value="F:double-stranded DNA binding"/>
    <property type="evidence" value="ECO:0000314"/>
    <property type="project" value="ARUK-UCL"/>
</dbReference>
<dbReference type="GO" id="GO:0004519">
    <property type="term" value="F:endonuclease activity"/>
    <property type="evidence" value="ECO:0000314"/>
    <property type="project" value="ARUK-UCL"/>
</dbReference>
<dbReference type="GO" id="GO:0004527">
    <property type="term" value="F:exonuclease activity"/>
    <property type="evidence" value="ECO:0000318"/>
    <property type="project" value="GO_Central"/>
</dbReference>
<dbReference type="GO" id="GO:0003723">
    <property type="term" value="F:RNA binding"/>
    <property type="evidence" value="ECO:0007005"/>
    <property type="project" value="UniProtKB"/>
</dbReference>
<dbReference type="GO" id="GO:0003697">
    <property type="term" value="F:single-stranded DNA binding"/>
    <property type="evidence" value="ECO:0000314"/>
    <property type="project" value="ARUK-UCL"/>
</dbReference>
<dbReference type="GO" id="GO:0006308">
    <property type="term" value="P:DNA catabolic process"/>
    <property type="evidence" value="ECO:0000314"/>
    <property type="project" value="ARUK-UCL"/>
</dbReference>
<dbReference type="GO" id="GO:0006281">
    <property type="term" value="P:DNA repair"/>
    <property type="evidence" value="ECO:0000314"/>
    <property type="project" value="ARUK-UCL"/>
</dbReference>
<dbReference type="GO" id="GO:0006355">
    <property type="term" value="P:regulation of DNA-templated transcription"/>
    <property type="evidence" value="ECO:0000303"/>
    <property type="project" value="UniProtKB"/>
</dbReference>
<dbReference type="GO" id="GO:0006396">
    <property type="term" value="P:RNA processing"/>
    <property type="evidence" value="ECO:0000318"/>
    <property type="project" value="GO_Central"/>
</dbReference>
<dbReference type="GO" id="GO:0006364">
    <property type="term" value="P:rRNA processing"/>
    <property type="evidence" value="ECO:0007669"/>
    <property type="project" value="InterPro"/>
</dbReference>
<dbReference type="CDD" id="cd06144">
    <property type="entry name" value="REX4_like"/>
    <property type="match status" value="1"/>
</dbReference>
<dbReference type="FunFam" id="3.30.420.10:FF:000007">
    <property type="entry name" value="Interferon-stimulated exonuclease gene 20"/>
    <property type="match status" value="1"/>
</dbReference>
<dbReference type="Gene3D" id="3.30.420.10">
    <property type="entry name" value="Ribonuclease H-like superfamily/Ribonuclease H"/>
    <property type="match status" value="1"/>
</dbReference>
<dbReference type="InterPro" id="IPR013520">
    <property type="entry name" value="Exonuclease_RNaseT/DNA_pol3"/>
</dbReference>
<dbReference type="InterPro" id="IPR037431">
    <property type="entry name" value="REX4_DEDDh_dom"/>
</dbReference>
<dbReference type="InterPro" id="IPR047021">
    <property type="entry name" value="REXO1/3/4-like"/>
</dbReference>
<dbReference type="InterPro" id="IPR012337">
    <property type="entry name" value="RNaseH-like_sf"/>
</dbReference>
<dbReference type="InterPro" id="IPR036397">
    <property type="entry name" value="RNaseH_sf"/>
</dbReference>
<dbReference type="PANTHER" id="PTHR12801:SF130">
    <property type="entry name" value="RNA EXONUCLEASE 4"/>
    <property type="match status" value="1"/>
</dbReference>
<dbReference type="PANTHER" id="PTHR12801">
    <property type="entry name" value="RNA EXONUCLEASE REXO1 / RECO3 FAMILY MEMBER-RELATED"/>
    <property type="match status" value="1"/>
</dbReference>
<dbReference type="Pfam" id="PF00929">
    <property type="entry name" value="RNase_T"/>
    <property type="match status" value="1"/>
</dbReference>
<dbReference type="SMART" id="SM00479">
    <property type="entry name" value="EXOIII"/>
    <property type="match status" value="1"/>
</dbReference>
<dbReference type="SUPFAM" id="SSF53098">
    <property type="entry name" value="Ribonuclease H-like"/>
    <property type="match status" value="1"/>
</dbReference>
<comment type="subunit">
    <text>Can bind ESR1 and ESR2. This interaction is abrogated by estrogen and augmented by tamoxifen treatment.</text>
</comment>
<comment type="interaction">
    <interactant intactId="EBI-2856313">
        <id>Q9GZR2</id>
    </interactant>
    <interactant intactId="EBI-10968534">
        <id>P50570-2</id>
        <label>DNM2</label>
    </interactant>
    <organismsDiffer>false</organismsDiffer>
    <experiments>3</experiments>
</comment>
<comment type="interaction">
    <interactant intactId="EBI-2856313">
        <id>Q9GZR2</id>
    </interactant>
    <interactant intactId="EBI-7116203">
        <id>O75031</id>
        <label>HSF2BP</label>
    </interactant>
    <organismsDiffer>false</organismsDiffer>
    <experiments>3</experiments>
</comment>
<comment type="interaction">
    <interactant intactId="EBI-2856313">
        <id>Q9GZR2</id>
    </interactant>
    <interactant intactId="EBI-466029">
        <id>P42858</id>
        <label>HTT</label>
    </interactant>
    <organismsDiffer>false</organismsDiffer>
    <experiments>3</experiments>
</comment>
<comment type="interaction">
    <interactant intactId="EBI-2856313">
        <id>Q9GZR2</id>
    </interactant>
    <interactant intactId="EBI-1391623">
        <id>P29474</id>
        <label>NOS3</label>
    </interactant>
    <organismsDiffer>false</organismsDiffer>
    <experiments>3</experiments>
</comment>
<comment type="subcellular location">
    <subcellularLocation>
        <location evidence="2 3">Nucleus</location>
        <location evidence="2 3">Nucleolus</location>
    </subcellularLocation>
</comment>
<comment type="alternative products">
    <event type="alternative splicing"/>
    <isoform>
        <id>Q9GZR2-1</id>
        <name>1</name>
        <sequence type="displayed"/>
    </isoform>
    <isoform>
        <id>Q9GZR2-2</id>
        <name>2</name>
        <sequence type="described" ref="VSP_014796 VSP_014797"/>
    </isoform>
</comment>
<comment type="similarity">
    <text evidence="5">Belongs to the REXO4 family.</text>
</comment>
<comment type="sequence caution" evidence="5">
    <conflict type="erroneous gene model prediction">
        <sequence resource="EMBL-CDS" id="CAI12845"/>
    </conflict>
</comment>
<comment type="sequence caution" evidence="5">
    <conflict type="erroneous gene model prediction">
        <sequence resource="EMBL-CDS" id="CAI12847"/>
    </conflict>
</comment>
<comment type="sequence caution" evidence="5">
    <conflict type="erroneous gene model prediction">
        <sequence resource="EMBL-CDS" id="CAI12848"/>
    </conflict>
</comment>
<feature type="chain" id="PRO_0000131703" description="RNA exonuclease 4">
    <location>
        <begin position="1"/>
        <end position="422"/>
    </location>
</feature>
<feature type="domain" description="Exonuclease">
    <location>
        <begin position="243"/>
        <end position="394"/>
    </location>
</feature>
<feature type="region of interest" description="Disordered" evidence="1">
    <location>
        <begin position="1"/>
        <end position="194"/>
    </location>
</feature>
<feature type="compositionally biased region" description="Basic residues" evidence="1">
    <location>
        <begin position="26"/>
        <end position="40"/>
    </location>
</feature>
<feature type="compositionally biased region" description="Basic and acidic residues" evidence="1">
    <location>
        <begin position="106"/>
        <end position="127"/>
    </location>
</feature>
<feature type="compositionally biased region" description="Basic and acidic residues" evidence="1">
    <location>
        <begin position="151"/>
        <end position="176"/>
    </location>
</feature>
<feature type="modified residue" description="Phosphoserine" evidence="6 7">
    <location>
        <position position="15"/>
    </location>
</feature>
<feature type="modified residue" description="Phosphoserine" evidence="7">
    <location>
        <position position="96"/>
    </location>
</feature>
<feature type="modified residue" description="Phosphoserine" evidence="7">
    <location>
        <position position="111"/>
    </location>
</feature>
<feature type="cross-link" description="Glycyl lysine isopeptide (Lys-Gly) (interchain with G-Cter in SUMO2)" evidence="8">
    <location>
        <position position="115"/>
    </location>
</feature>
<feature type="splice variant" id="VSP_014796" description="In isoform 2." evidence="5">
    <original>WLLKQKSQAPEKPLVISQMGSKKKPKIIQQNKKETSPQVKGEEMPAGKDQEASRGSV</original>
    <variation>VPRWTGGRQYLAPRPVEQSTIRKEPRKGQMVILFQNEGTSSIRSGKLRRQPQPHPPR</variation>
    <location>
        <begin position="76"/>
        <end position="132"/>
    </location>
</feature>
<feature type="splice variant" id="VSP_014797" description="In isoform 2." evidence="5">
    <location>
        <begin position="133"/>
        <end position="304"/>
    </location>
</feature>
<feature type="sequence variant" id="VAR_023067" description="In dbSNP:rs6597630.">
    <original>R</original>
    <variation>K</variation>
    <location>
        <position position="141"/>
    </location>
</feature>
<feature type="sequence variant" id="VAR_023068" description="In dbSNP:rs2285487." evidence="4">
    <original>T</original>
    <variation>A</variation>
    <location>
        <position position="283"/>
    </location>
</feature>
<feature type="sequence conflict" description="In Ref. 1 and 2." evidence="5" ref="1 2">
    <original>A</original>
    <variation>P</variation>
    <location>
        <position position="202"/>
    </location>
</feature>
<sequence>MGKAKVPASKRAPSSPVAKPGPVKTLTRKKNKKKKRFWKSKAREVSKKPASGPGAVVRPPKAPEDFSQNWKALQEWLLKQKSQAPEKPLVISQMGSKKKPKIIQQNKKETSPQVKGEEMPAGKDQEASRGSVPSGSKMDRRAPVPRTKASGTEHNKKGTKERTNGDIVPERGDIEHKKRKAKEAAPAPPTEEDIWFDDVDPADIEAAIGPEAAKIARKQLGQSEGSVSLSLVKEQAFGGLTRALALDCEMVGVGPKGEESMAARVSIVNQYGKCVYDKYVKPTEPVTDYRTAVSGIRPENLKQGEELEVVQKEVAEMLKGRILVGHALHNDLKVLFLDHPKKKIRDTQKYKPFKSQVKSGRPSLRLLSEKILGLQVQQAEHCSIQDAQAAMRLYVMVKKEWESMARDRRPLLTAPDHCSDDA</sequence>
<proteinExistence type="evidence at protein level"/>
<keyword id="KW-0025">Alternative splicing</keyword>
<keyword id="KW-0269">Exonuclease</keyword>
<keyword id="KW-0378">Hydrolase</keyword>
<keyword id="KW-1017">Isopeptide bond</keyword>
<keyword id="KW-0540">Nuclease</keyword>
<keyword id="KW-0539">Nucleus</keyword>
<keyword id="KW-0597">Phosphoprotein</keyword>
<keyword id="KW-1267">Proteomics identification</keyword>
<keyword id="KW-1185">Reference proteome</keyword>
<keyword id="KW-0832">Ubl conjugation</keyword>
<gene>
    <name type="primary">REXO4</name>
    <name type="synonym">PMC2</name>
    <name type="synonym">XPMC2H</name>
</gene>
<organism>
    <name type="scientific">Homo sapiens</name>
    <name type="common">Human</name>
    <dbReference type="NCBI Taxonomy" id="9606"/>
    <lineage>
        <taxon>Eukaryota</taxon>
        <taxon>Metazoa</taxon>
        <taxon>Chordata</taxon>
        <taxon>Craniata</taxon>
        <taxon>Vertebrata</taxon>
        <taxon>Euteleostomi</taxon>
        <taxon>Mammalia</taxon>
        <taxon>Eutheria</taxon>
        <taxon>Euarchontoglires</taxon>
        <taxon>Primates</taxon>
        <taxon>Haplorrhini</taxon>
        <taxon>Catarrhini</taxon>
        <taxon>Hominidae</taxon>
        <taxon>Homo</taxon>
    </lineage>
</organism>
<reference key="1">
    <citation type="journal article" date="1997" name="Genomics">
        <title>Human XPMC2H: cDNA cloning, mapping to 9q34, genomic structure, and evaluation as TSC1.</title>
        <authorList>
            <person name="Kwiatkowska J."/>
            <person name="Slomski R."/>
            <person name="Jozwiak S."/>
            <person name="Short M.P."/>
            <person name="Kwiatkowski D.J."/>
        </authorList>
    </citation>
    <scope>NUCLEOTIDE SEQUENCE [MRNA] (ISOFORM 1)</scope>
    <scope>VARIANT ALA-283</scope>
</reference>
<reference key="2">
    <citation type="journal article" date="2000" name="J. Biol. Chem.">
        <title>Identification and characterization of a novel factor that regulates quinone reductase gene transcriptional activity.</title>
        <authorList>
            <person name="Montano M.M."/>
            <person name="Wittmann B.M."/>
            <person name="Bianco N.R."/>
        </authorList>
    </citation>
    <scope>NUCLEOTIDE SEQUENCE [MRNA] (ISOFORM 1)</scope>
    <scope>SUBCELLULAR LOCATION</scope>
    <scope>INTERACTION WITH ESR1 AND ESR2</scope>
</reference>
<reference key="3">
    <citation type="journal article" date="2001" name="Genome Res.">
        <title>Towards a catalog of human genes and proteins: sequencing and analysis of 500 novel complete protein coding human cDNAs.</title>
        <authorList>
            <person name="Wiemann S."/>
            <person name="Weil B."/>
            <person name="Wellenreuther R."/>
            <person name="Gassenhuber J."/>
            <person name="Glassl S."/>
            <person name="Ansorge W."/>
            <person name="Boecher M."/>
            <person name="Bloecker H."/>
            <person name="Bauersachs S."/>
            <person name="Blum H."/>
            <person name="Lauber J."/>
            <person name="Duesterhoeft A."/>
            <person name="Beyer A."/>
            <person name="Koehrer K."/>
            <person name="Strack N."/>
            <person name="Mewes H.-W."/>
            <person name="Ottenwaelder B."/>
            <person name="Obermaier B."/>
            <person name="Tampe J."/>
            <person name="Heubner D."/>
            <person name="Wambutt R."/>
            <person name="Korn B."/>
            <person name="Klein M."/>
            <person name="Poustka A."/>
        </authorList>
    </citation>
    <scope>NUCLEOTIDE SEQUENCE [LARGE SCALE MRNA] (ISOFORM 1)</scope>
    <source>
        <tissue>Testis</tissue>
    </source>
</reference>
<reference key="4">
    <citation type="journal article" date="2004" name="Nat. Genet.">
        <title>Complete sequencing and characterization of 21,243 full-length human cDNAs.</title>
        <authorList>
            <person name="Ota T."/>
            <person name="Suzuki Y."/>
            <person name="Nishikawa T."/>
            <person name="Otsuki T."/>
            <person name="Sugiyama T."/>
            <person name="Irie R."/>
            <person name="Wakamatsu A."/>
            <person name="Hayashi K."/>
            <person name="Sato H."/>
            <person name="Nagai K."/>
            <person name="Kimura K."/>
            <person name="Makita H."/>
            <person name="Sekine M."/>
            <person name="Obayashi M."/>
            <person name="Nishi T."/>
            <person name="Shibahara T."/>
            <person name="Tanaka T."/>
            <person name="Ishii S."/>
            <person name="Yamamoto J."/>
            <person name="Saito K."/>
            <person name="Kawai Y."/>
            <person name="Isono Y."/>
            <person name="Nakamura Y."/>
            <person name="Nagahari K."/>
            <person name="Murakami K."/>
            <person name="Yasuda T."/>
            <person name="Iwayanagi T."/>
            <person name="Wagatsuma M."/>
            <person name="Shiratori A."/>
            <person name="Sudo H."/>
            <person name="Hosoiri T."/>
            <person name="Kaku Y."/>
            <person name="Kodaira H."/>
            <person name="Kondo H."/>
            <person name="Sugawara M."/>
            <person name="Takahashi M."/>
            <person name="Kanda K."/>
            <person name="Yokoi T."/>
            <person name="Furuya T."/>
            <person name="Kikkawa E."/>
            <person name="Omura Y."/>
            <person name="Abe K."/>
            <person name="Kamihara K."/>
            <person name="Katsuta N."/>
            <person name="Sato K."/>
            <person name="Tanikawa M."/>
            <person name="Yamazaki M."/>
            <person name="Ninomiya K."/>
            <person name="Ishibashi T."/>
            <person name="Yamashita H."/>
            <person name="Murakawa K."/>
            <person name="Fujimori K."/>
            <person name="Tanai H."/>
            <person name="Kimata M."/>
            <person name="Watanabe M."/>
            <person name="Hiraoka S."/>
            <person name="Chiba Y."/>
            <person name="Ishida S."/>
            <person name="Ono Y."/>
            <person name="Takiguchi S."/>
            <person name="Watanabe S."/>
            <person name="Yosida M."/>
            <person name="Hotuta T."/>
            <person name="Kusano J."/>
            <person name="Kanehori K."/>
            <person name="Takahashi-Fujii A."/>
            <person name="Hara H."/>
            <person name="Tanase T.-O."/>
            <person name="Nomura Y."/>
            <person name="Togiya S."/>
            <person name="Komai F."/>
            <person name="Hara R."/>
            <person name="Takeuchi K."/>
            <person name="Arita M."/>
            <person name="Imose N."/>
            <person name="Musashino K."/>
            <person name="Yuuki H."/>
            <person name="Oshima A."/>
            <person name="Sasaki N."/>
            <person name="Aotsuka S."/>
            <person name="Yoshikawa Y."/>
            <person name="Matsunawa H."/>
            <person name="Ichihara T."/>
            <person name="Shiohata N."/>
            <person name="Sano S."/>
            <person name="Moriya S."/>
            <person name="Momiyama H."/>
            <person name="Satoh N."/>
            <person name="Takami S."/>
            <person name="Terashima Y."/>
            <person name="Suzuki O."/>
            <person name="Nakagawa S."/>
            <person name="Senoh A."/>
            <person name="Mizoguchi H."/>
            <person name="Goto Y."/>
            <person name="Shimizu F."/>
            <person name="Wakebe H."/>
            <person name="Hishigaki H."/>
            <person name="Watanabe T."/>
            <person name="Sugiyama A."/>
            <person name="Takemoto M."/>
            <person name="Kawakami B."/>
            <person name="Yamazaki M."/>
            <person name="Watanabe K."/>
            <person name="Kumagai A."/>
            <person name="Itakura S."/>
            <person name="Fukuzumi Y."/>
            <person name="Fujimori Y."/>
            <person name="Komiyama M."/>
            <person name="Tashiro H."/>
            <person name="Tanigami A."/>
            <person name="Fujiwara T."/>
            <person name="Ono T."/>
            <person name="Yamada K."/>
            <person name="Fujii Y."/>
            <person name="Ozaki K."/>
            <person name="Hirao M."/>
            <person name="Ohmori Y."/>
            <person name="Kawabata A."/>
            <person name="Hikiji T."/>
            <person name="Kobatake N."/>
            <person name="Inagaki H."/>
            <person name="Ikema Y."/>
            <person name="Okamoto S."/>
            <person name="Okitani R."/>
            <person name="Kawakami T."/>
            <person name="Noguchi S."/>
            <person name="Itoh T."/>
            <person name="Shigeta K."/>
            <person name="Senba T."/>
            <person name="Matsumura K."/>
            <person name="Nakajima Y."/>
            <person name="Mizuno T."/>
            <person name="Morinaga M."/>
            <person name="Sasaki M."/>
            <person name="Togashi T."/>
            <person name="Oyama M."/>
            <person name="Hata H."/>
            <person name="Watanabe M."/>
            <person name="Komatsu T."/>
            <person name="Mizushima-Sugano J."/>
            <person name="Satoh T."/>
            <person name="Shirai Y."/>
            <person name="Takahashi Y."/>
            <person name="Nakagawa K."/>
            <person name="Okumura K."/>
            <person name="Nagase T."/>
            <person name="Nomura N."/>
            <person name="Kikuchi H."/>
            <person name="Masuho Y."/>
            <person name="Yamashita R."/>
            <person name="Nakai K."/>
            <person name="Yada T."/>
            <person name="Nakamura Y."/>
            <person name="Ohara O."/>
            <person name="Isogai T."/>
            <person name="Sugano S."/>
        </authorList>
    </citation>
    <scope>NUCLEOTIDE SEQUENCE [LARGE SCALE MRNA] (ISOFORM 1)</scope>
</reference>
<reference key="5">
    <citation type="journal article" date="2004" name="Nature">
        <title>DNA sequence and analysis of human chromosome 9.</title>
        <authorList>
            <person name="Humphray S.J."/>
            <person name="Oliver K."/>
            <person name="Hunt A.R."/>
            <person name="Plumb R.W."/>
            <person name="Loveland J.E."/>
            <person name="Howe K.L."/>
            <person name="Andrews T.D."/>
            <person name="Searle S."/>
            <person name="Hunt S.E."/>
            <person name="Scott C.E."/>
            <person name="Jones M.C."/>
            <person name="Ainscough R."/>
            <person name="Almeida J.P."/>
            <person name="Ambrose K.D."/>
            <person name="Ashwell R.I.S."/>
            <person name="Babbage A.K."/>
            <person name="Babbage S."/>
            <person name="Bagguley C.L."/>
            <person name="Bailey J."/>
            <person name="Banerjee R."/>
            <person name="Barker D.J."/>
            <person name="Barlow K.F."/>
            <person name="Bates K."/>
            <person name="Beasley H."/>
            <person name="Beasley O."/>
            <person name="Bird C.P."/>
            <person name="Bray-Allen S."/>
            <person name="Brown A.J."/>
            <person name="Brown J.Y."/>
            <person name="Burford D."/>
            <person name="Burrill W."/>
            <person name="Burton J."/>
            <person name="Carder C."/>
            <person name="Carter N.P."/>
            <person name="Chapman J.C."/>
            <person name="Chen Y."/>
            <person name="Clarke G."/>
            <person name="Clark S.Y."/>
            <person name="Clee C.M."/>
            <person name="Clegg S."/>
            <person name="Collier R.E."/>
            <person name="Corby N."/>
            <person name="Crosier M."/>
            <person name="Cummings A.T."/>
            <person name="Davies J."/>
            <person name="Dhami P."/>
            <person name="Dunn M."/>
            <person name="Dutta I."/>
            <person name="Dyer L.W."/>
            <person name="Earthrowl M.E."/>
            <person name="Faulkner L."/>
            <person name="Fleming C.J."/>
            <person name="Frankish A."/>
            <person name="Frankland J.A."/>
            <person name="French L."/>
            <person name="Fricker D.G."/>
            <person name="Garner P."/>
            <person name="Garnett J."/>
            <person name="Ghori J."/>
            <person name="Gilbert J.G.R."/>
            <person name="Glison C."/>
            <person name="Grafham D.V."/>
            <person name="Gribble S."/>
            <person name="Griffiths C."/>
            <person name="Griffiths-Jones S."/>
            <person name="Grocock R."/>
            <person name="Guy J."/>
            <person name="Hall R.E."/>
            <person name="Hammond S."/>
            <person name="Harley J.L."/>
            <person name="Harrison E.S.I."/>
            <person name="Hart E.A."/>
            <person name="Heath P.D."/>
            <person name="Henderson C.D."/>
            <person name="Hopkins B.L."/>
            <person name="Howard P.J."/>
            <person name="Howden P.J."/>
            <person name="Huckle E."/>
            <person name="Johnson C."/>
            <person name="Johnson D."/>
            <person name="Joy A.A."/>
            <person name="Kay M."/>
            <person name="Keenan S."/>
            <person name="Kershaw J.K."/>
            <person name="Kimberley A.M."/>
            <person name="King A."/>
            <person name="Knights A."/>
            <person name="Laird G.K."/>
            <person name="Langford C."/>
            <person name="Lawlor S."/>
            <person name="Leongamornlert D.A."/>
            <person name="Leversha M."/>
            <person name="Lloyd C."/>
            <person name="Lloyd D.M."/>
            <person name="Lovell J."/>
            <person name="Martin S."/>
            <person name="Mashreghi-Mohammadi M."/>
            <person name="Matthews L."/>
            <person name="McLaren S."/>
            <person name="McLay K.E."/>
            <person name="McMurray A."/>
            <person name="Milne S."/>
            <person name="Nickerson T."/>
            <person name="Nisbett J."/>
            <person name="Nordsiek G."/>
            <person name="Pearce A.V."/>
            <person name="Peck A.I."/>
            <person name="Porter K.M."/>
            <person name="Pandian R."/>
            <person name="Pelan S."/>
            <person name="Phillimore B."/>
            <person name="Povey S."/>
            <person name="Ramsey Y."/>
            <person name="Rand V."/>
            <person name="Scharfe M."/>
            <person name="Sehra H.K."/>
            <person name="Shownkeen R."/>
            <person name="Sims S.K."/>
            <person name="Skuce C.D."/>
            <person name="Smith M."/>
            <person name="Steward C.A."/>
            <person name="Swarbreck D."/>
            <person name="Sycamore N."/>
            <person name="Tester J."/>
            <person name="Thorpe A."/>
            <person name="Tracey A."/>
            <person name="Tromans A."/>
            <person name="Thomas D.W."/>
            <person name="Wall M."/>
            <person name="Wallis J.M."/>
            <person name="West A.P."/>
            <person name="Whitehead S.L."/>
            <person name="Willey D.L."/>
            <person name="Williams S.A."/>
            <person name="Wilming L."/>
            <person name="Wray P.W."/>
            <person name="Young L."/>
            <person name="Ashurst J.L."/>
            <person name="Coulson A."/>
            <person name="Blocker H."/>
            <person name="Durbin R.M."/>
            <person name="Sulston J.E."/>
            <person name="Hubbard T."/>
            <person name="Jackson M.J."/>
            <person name="Bentley D.R."/>
            <person name="Beck S."/>
            <person name="Rogers J."/>
            <person name="Dunham I."/>
        </authorList>
    </citation>
    <scope>NUCLEOTIDE SEQUENCE [LARGE SCALE GENOMIC DNA] (ISOFORM 2)</scope>
</reference>
<reference key="6">
    <citation type="submission" date="2005-07" db="EMBL/GenBank/DDBJ databases">
        <authorList>
            <person name="Mural R.J."/>
            <person name="Istrail S."/>
            <person name="Sutton G.G."/>
            <person name="Florea L."/>
            <person name="Halpern A.L."/>
            <person name="Mobarry C.M."/>
            <person name="Lippert R."/>
            <person name="Walenz B."/>
            <person name="Shatkay H."/>
            <person name="Dew I."/>
            <person name="Miller J.R."/>
            <person name="Flanigan M.J."/>
            <person name="Edwards N.J."/>
            <person name="Bolanos R."/>
            <person name="Fasulo D."/>
            <person name="Halldorsson B.V."/>
            <person name="Hannenhalli S."/>
            <person name="Turner R."/>
            <person name="Yooseph S."/>
            <person name="Lu F."/>
            <person name="Nusskern D.R."/>
            <person name="Shue B.C."/>
            <person name="Zheng X.H."/>
            <person name="Zhong F."/>
            <person name="Delcher A.L."/>
            <person name="Huson D.H."/>
            <person name="Kravitz S.A."/>
            <person name="Mouchard L."/>
            <person name="Reinert K."/>
            <person name="Remington K.A."/>
            <person name="Clark A.G."/>
            <person name="Waterman M.S."/>
            <person name="Eichler E.E."/>
            <person name="Adams M.D."/>
            <person name="Hunkapiller M.W."/>
            <person name="Myers E.W."/>
            <person name="Venter J.C."/>
        </authorList>
    </citation>
    <scope>NUCLEOTIDE SEQUENCE [LARGE SCALE GENOMIC DNA]</scope>
</reference>
<reference key="7">
    <citation type="journal article" date="2004" name="Genome Res.">
        <title>The status, quality, and expansion of the NIH full-length cDNA project: the Mammalian Gene Collection (MGC).</title>
        <authorList>
            <consortium name="The MGC Project Team"/>
        </authorList>
    </citation>
    <scope>NUCLEOTIDE SEQUENCE [LARGE SCALE MRNA] (ISOFORM 1)</scope>
</reference>
<reference key="8">
    <citation type="journal article" date="2002" name="Mol. Biol. Cell">
        <title>Functional proteomic analysis of human nucleolus.</title>
        <authorList>
            <person name="Scherl A."/>
            <person name="Coute Y."/>
            <person name="Deon C."/>
            <person name="Calle A."/>
            <person name="Kindbeiter K."/>
            <person name="Sanchez J.-C."/>
            <person name="Greco A."/>
            <person name="Hochstrasser D.F."/>
            <person name="Diaz J.-J."/>
        </authorList>
    </citation>
    <scope>SUBCELLULAR LOCATION [LARGE SCALE ANALYSIS]</scope>
    <source>
        <tissue>Cervix carcinoma</tissue>
    </source>
</reference>
<reference key="9">
    <citation type="journal article" date="2008" name="Proc. Natl. Acad. Sci. U.S.A.">
        <title>A quantitative atlas of mitotic phosphorylation.</title>
        <authorList>
            <person name="Dephoure N."/>
            <person name="Zhou C."/>
            <person name="Villen J."/>
            <person name="Beausoleil S.A."/>
            <person name="Bakalarski C.E."/>
            <person name="Elledge S.J."/>
            <person name="Gygi S.P."/>
        </authorList>
    </citation>
    <scope>PHOSPHORYLATION [LARGE SCALE ANALYSIS] AT SER-15</scope>
    <scope>IDENTIFICATION BY MASS SPECTROMETRY [LARGE SCALE ANALYSIS]</scope>
    <source>
        <tissue>Cervix carcinoma</tissue>
    </source>
</reference>
<reference key="10">
    <citation type="journal article" date="2011" name="Sci. Signal.">
        <title>System-wide temporal characterization of the proteome and phosphoproteome of human embryonic stem cell differentiation.</title>
        <authorList>
            <person name="Rigbolt K.T."/>
            <person name="Prokhorova T.A."/>
            <person name="Akimov V."/>
            <person name="Henningsen J."/>
            <person name="Johansen P.T."/>
            <person name="Kratchmarova I."/>
            <person name="Kassem M."/>
            <person name="Mann M."/>
            <person name="Olsen J.V."/>
            <person name="Blagoev B."/>
        </authorList>
    </citation>
    <scope>IDENTIFICATION BY MASS SPECTROMETRY [LARGE SCALE ANALYSIS]</scope>
</reference>
<reference key="11">
    <citation type="journal article" date="2012" name="Proc. Natl. Acad. Sci. U.S.A.">
        <title>N-terminal acetylome analyses and functional insights of the N-terminal acetyltransferase NatB.</title>
        <authorList>
            <person name="Van Damme P."/>
            <person name="Lasa M."/>
            <person name="Polevoda B."/>
            <person name="Gazquez C."/>
            <person name="Elosegui-Artola A."/>
            <person name="Kim D.S."/>
            <person name="De Juan-Pardo E."/>
            <person name="Demeyer K."/>
            <person name="Hole K."/>
            <person name="Larrea E."/>
            <person name="Timmerman E."/>
            <person name="Prieto J."/>
            <person name="Arnesen T."/>
            <person name="Sherman F."/>
            <person name="Gevaert K."/>
            <person name="Aldabe R."/>
        </authorList>
    </citation>
    <scope>IDENTIFICATION BY MASS SPECTROMETRY [LARGE SCALE ANALYSIS]</scope>
</reference>
<reference key="12">
    <citation type="journal article" date="2013" name="J. Proteome Res.">
        <title>Toward a comprehensive characterization of a human cancer cell phosphoproteome.</title>
        <authorList>
            <person name="Zhou H."/>
            <person name="Di Palma S."/>
            <person name="Preisinger C."/>
            <person name="Peng M."/>
            <person name="Polat A.N."/>
            <person name="Heck A.J."/>
            <person name="Mohammed S."/>
        </authorList>
    </citation>
    <scope>PHOSPHORYLATION [LARGE SCALE ANALYSIS] AT SER-15; SER-96 AND SER-111</scope>
    <scope>IDENTIFICATION BY MASS SPECTROMETRY [LARGE SCALE ANALYSIS]</scope>
    <source>
        <tissue>Cervix carcinoma</tissue>
        <tissue>Erythroleukemia</tissue>
    </source>
</reference>
<reference key="13">
    <citation type="journal article" date="2014" name="J. Proteomics">
        <title>An enzyme assisted RP-RPLC approach for in-depth analysis of human liver phosphoproteome.</title>
        <authorList>
            <person name="Bian Y."/>
            <person name="Song C."/>
            <person name="Cheng K."/>
            <person name="Dong M."/>
            <person name="Wang F."/>
            <person name="Huang J."/>
            <person name="Sun D."/>
            <person name="Wang L."/>
            <person name="Ye M."/>
            <person name="Zou H."/>
        </authorList>
    </citation>
    <scope>IDENTIFICATION BY MASS SPECTROMETRY [LARGE SCALE ANALYSIS]</scope>
    <source>
        <tissue>Liver</tissue>
    </source>
</reference>
<reference key="14">
    <citation type="journal article" date="2017" name="Nat. Struct. Mol. Biol.">
        <title>Site-specific mapping of the human SUMO proteome reveals co-modification with phosphorylation.</title>
        <authorList>
            <person name="Hendriks I.A."/>
            <person name="Lyon D."/>
            <person name="Young C."/>
            <person name="Jensen L.J."/>
            <person name="Vertegaal A.C."/>
            <person name="Nielsen M.L."/>
        </authorList>
    </citation>
    <scope>SUMOYLATION [LARGE SCALE ANALYSIS] AT LYS-115</scope>
    <scope>IDENTIFICATION BY MASS SPECTROMETRY [LARGE SCALE ANALYSIS]</scope>
</reference>
<protein>
    <recommendedName>
        <fullName>RNA exonuclease 4</fullName>
        <ecNumber>3.1.-.-</ecNumber>
    </recommendedName>
    <alternativeName>
        <fullName>Exonuclease XPMC2</fullName>
    </alternativeName>
    <alternativeName>
        <fullName>Prevents mitotic catastrophe 2 protein homolog</fullName>
        <shortName>hPMC2</shortName>
    </alternativeName>
</protein>